<accession>Q8TPA6</accession>
<name>MAX1_METAC</name>
<sequence length="350" mass="38198">MITVNFLILLLGLVFLVKGSDYFVKSASTIAKKLGVSEFVIGLTLVAIGTSIPELASSIAASIQQASGIVIGNVVGSNIANVGLIVGVAALLSPMKTEIDMLKRDGYIMLFSAVLFFVFAFNRELSMLEAGLFVLLYIAYVFFLFEEAEKYEGKLHFKEFITYFFKFKYINSAMQKLNGNRNRNSDSDRNSDSGNGNERLEGGFAKDIFTLVLSCAAIVIGAKYFVEESIFFAELLGIPDTVIGTTLVAVGTSLPELVVTVSAARQGYGSIALGNVIGSNITNIFLILGLSGLFYPLSVAEMSLFFTTPVMIAISLILLIFISTGWEIKRWEGVVLMMFYVAFLVVLFYI</sequence>
<feature type="chain" id="PRO_0000428837" description="Sodium/calcium exchanger MaX1">
    <location>
        <begin position="1"/>
        <end position="350"/>
    </location>
</feature>
<feature type="transmembrane region" description="Helical" evidence="1">
    <location>
        <begin position="4"/>
        <end position="24"/>
    </location>
</feature>
<feature type="transmembrane region" description="Helical" evidence="1">
    <location>
        <begin position="39"/>
        <end position="59"/>
    </location>
</feature>
<feature type="transmembrane region" description="Helical" evidence="1">
    <location>
        <begin position="69"/>
        <end position="89"/>
    </location>
</feature>
<feature type="transmembrane region" description="Helical" evidence="1">
    <location>
        <begin position="101"/>
        <end position="121"/>
    </location>
</feature>
<feature type="transmembrane region" description="Helical" evidence="1">
    <location>
        <begin position="125"/>
        <end position="145"/>
    </location>
</feature>
<feature type="transmembrane region" description="Helical" evidence="1">
    <location>
        <begin position="202"/>
        <end position="222"/>
    </location>
</feature>
<feature type="transmembrane region" description="Helical" evidence="1">
    <location>
        <begin position="242"/>
        <end position="264"/>
    </location>
</feature>
<feature type="transmembrane region" description="Helical" evidence="1">
    <location>
        <begin position="276"/>
        <end position="296"/>
    </location>
</feature>
<feature type="transmembrane region" description="Helical" evidence="1">
    <location>
        <begin position="302"/>
        <end position="322"/>
    </location>
</feature>
<feature type="transmembrane region" description="Helical" evidence="1">
    <location>
        <begin position="330"/>
        <end position="350"/>
    </location>
</feature>
<organism>
    <name type="scientific">Methanosarcina acetivorans (strain ATCC 35395 / DSM 2834 / JCM 12185 / C2A)</name>
    <dbReference type="NCBI Taxonomy" id="188937"/>
    <lineage>
        <taxon>Archaea</taxon>
        <taxon>Methanobacteriati</taxon>
        <taxon>Methanobacteriota</taxon>
        <taxon>Stenosarchaea group</taxon>
        <taxon>Methanomicrobia</taxon>
        <taxon>Methanosarcinales</taxon>
        <taxon>Methanosarcinaceae</taxon>
        <taxon>Methanosarcina</taxon>
    </lineage>
</organism>
<evidence type="ECO:0000255" key="1"/>
<evidence type="ECO:0000269" key="2">
    <source>
    </source>
</evidence>
<evidence type="ECO:0000305" key="3"/>
<gene>
    <name type="primary">maX1</name>
    <name type="ordered locus">MA_2008</name>
</gene>
<keyword id="KW-0050">Antiport</keyword>
<keyword id="KW-0106">Calcium</keyword>
<keyword id="KW-0109">Calcium transport</keyword>
<keyword id="KW-1003">Cell membrane</keyword>
<keyword id="KW-0406">Ion transport</keyword>
<keyword id="KW-0472">Membrane</keyword>
<keyword id="KW-1185">Reference proteome</keyword>
<keyword id="KW-0915">Sodium</keyword>
<keyword id="KW-0739">Sodium transport</keyword>
<keyword id="KW-0812">Transmembrane</keyword>
<keyword id="KW-1133">Transmembrane helix</keyword>
<keyword id="KW-0813">Transport</keyword>
<comment type="function">
    <text evidence="2">Catalyzes Na(+)/Ca(2+) exchange. The transport is electrogenic with a likely stoichiometry of 3 or more Na(+) for each Ca(2+). Is K(+)-independent.</text>
</comment>
<comment type="activity regulation">
    <text evidence="2">Calcium transport is inhibited by Na(+), K(+), Li(+), Mg(2+) or Mn(2+).</text>
</comment>
<comment type="subcellular location">
    <subcellularLocation>
        <location evidence="2">Cell membrane</location>
        <topology evidence="2">Multi-pass membrane protein</topology>
    </subcellularLocation>
</comment>
<comment type="similarity">
    <text evidence="3">Belongs to the Ca(2+):cation antiporter (CaCA) (TC 2.A.19) family.</text>
</comment>
<proteinExistence type="evidence at protein level"/>
<reference key="1">
    <citation type="journal article" date="2002" name="Genome Res.">
        <title>The genome of Methanosarcina acetivorans reveals extensive metabolic and physiological diversity.</title>
        <authorList>
            <person name="Galagan J.E."/>
            <person name="Nusbaum C."/>
            <person name="Roy A."/>
            <person name="Endrizzi M.G."/>
            <person name="Macdonald P."/>
            <person name="FitzHugh W."/>
            <person name="Calvo S."/>
            <person name="Engels R."/>
            <person name="Smirnov S."/>
            <person name="Atnoor D."/>
            <person name="Brown A."/>
            <person name="Allen N."/>
            <person name="Naylor J."/>
            <person name="Stange-Thomann N."/>
            <person name="DeArellano K."/>
            <person name="Johnson R."/>
            <person name="Linton L."/>
            <person name="McEwan P."/>
            <person name="McKernan K."/>
            <person name="Talamas J."/>
            <person name="Tirrell A."/>
            <person name="Ye W."/>
            <person name="Zimmer A."/>
            <person name="Barber R.D."/>
            <person name="Cann I."/>
            <person name="Graham D.E."/>
            <person name="Grahame D.A."/>
            <person name="Guss A.M."/>
            <person name="Hedderich R."/>
            <person name="Ingram-Smith C."/>
            <person name="Kuettner H.C."/>
            <person name="Krzycki J.A."/>
            <person name="Leigh J.A."/>
            <person name="Li W."/>
            <person name="Liu J."/>
            <person name="Mukhopadhyay B."/>
            <person name="Reeve J.N."/>
            <person name="Smith K."/>
            <person name="Springer T.A."/>
            <person name="Umayam L.A."/>
            <person name="White O."/>
            <person name="White R.H."/>
            <person name="de Macario E.C."/>
            <person name="Ferry J.G."/>
            <person name="Jarrell K.F."/>
            <person name="Jing H."/>
            <person name="Macario A.J.L."/>
            <person name="Paulsen I.T."/>
            <person name="Pritchett M."/>
            <person name="Sowers K.R."/>
            <person name="Swanson R.V."/>
            <person name="Zinder S.H."/>
            <person name="Lander E."/>
            <person name="Metcalf W.W."/>
            <person name="Birren B."/>
        </authorList>
    </citation>
    <scope>NUCLEOTIDE SEQUENCE [LARGE SCALE GENOMIC DNA]</scope>
    <source>
        <strain>ATCC 35395 / DSM 2834 / JCM 12185 / C2A</strain>
    </source>
</reference>
<reference key="2">
    <citation type="journal article" date="2012" name="J. Biol. Chem.">
        <title>Characterization and purification of a Na+/Ca2+ exchanger from an archaebacterium.</title>
        <authorList>
            <person name="Besserer G.M."/>
            <person name="Nicoll D.A."/>
            <person name="Abramson J."/>
            <person name="Philipson K.D."/>
        </authorList>
    </citation>
    <scope>FUNCTION AS AN EXCHANGER</scope>
    <scope>ACTIVITY REGULATION</scope>
    <scope>SUBCELLULAR LOCATION</scope>
    <scope>GENE NAME</scope>
</reference>
<protein>
    <recommendedName>
        <fullName>Sodium/calcium exchanger MaX1</fullName>
    </recommendedName>
    <alternativeName>
        <fullName>Na(+)/Ca(2+) antiporter MaX1</fullName>
    </alternativeName>
</protein>
<dbReference type="EMBL" id="AE010299">
    <property type="protein sequence ID" value="AAM05411.1"/>
    <property type="molecule type" value="Genomic_DNA"/>
</dbReference>
<dbReference type="RefSeq" id="WP_011022002.1">
    <property type="nucleotide sequence ID" value="NC_003552.1"/>
</dbReference>
<dbReference type="SMR" id="Q8TPA6"/>
<dbReference type="FunCoup" id="Q8TPA6">
    <property type="interactions" value="22"/>
</dbReference>
<dbReference type="STRING" id="188937.MA_2008"/>
<dbReference type="TCDB" id="2.A.19.5.4">
    <property type="family name" value="the ca(2+):cation antiporter (caca) family"/>
</dbReference>
<dbReference type="EnsemblBacteria" id="AAM05411">
    <property type="protein sequence ID" value="AAM05411"/>
    <property type="gene ID" value="MA_2008"/>
</dbReference>
<dbReference type="GeneID" id="1473897"/>
<dbReference type="KEGG" id="mac:MA_2008"/>
<dbReference type="HOGENOM" id="CLU_007948_0_3_2"/>
<dbReference type="InParanoid" id="Q8TPA6"/>
<dbReference type="OrthoDB" id="142185at2157"/>
<dbReference type="PhylomeDB" id="Q8TPA6"/>
<dbReference type="Proteomes" id="UP000002487">
    <property type="component" value="Chromosome"/>
</dbReference>
<dbReference type="GO" id="GO:0005886">
    <property type="term" value="C:plasma membrane"/>
    <property type="evidence" value="ECO:0000318"/>
    <property type="project" value="GO_Central"/>
</dbReference>
<dbReference type="GO" id="GO:0005262">
    <property type="term" value="F:calcium channel activity"/>
    <property type="evidence" value="ECO:0000318"/>
    <property type="project" value="GO_Central"/>
</dbReference>
<dbReference type="GO" id="GO:0008273">
    <property type="term" value="F:calcium, potassium:sodium antiporter activity"/>
    <property type="evidence" value="ECO:0000318"/>
    <property type="project" value="GO_Central"/>
</dbReference>
<dbReference type="GO" id="GO:0070588">
    <property type="term" value="P:calcium ion transmembrane transport"/>
    <property type="evidence" value="ECO:0000318"/>
    <property type="project" value="GO_Central"/>
</dbReference>
<dbReference type="GO" id="GO:0006874">
    <property type="term" value="P:intracellular calcium ion homeostasis"/>
    <property type="evidence" value="ECO:0000318"/>
    <property type="project" value="GO_Central"/>
</dbReference>
<dbReference type="FunFam" id="1.20.1420.30:FF:000031">
    <property type="entry name" value="K+-dependent Na+/Ca+ exchanger related-protein"/>
    <property type="match status" value="1"/>
</dbReference>
<dbReference type="FunFam" id="1.20.1420.30:FF:000036">
    <property type="entry name" value="Sodium/calcium exchanger MaX1"/>
    <property type="match status" value="1"/>
</dbReference>
<dbReference type="Gene3D" id="1.20.1420.30">
    <property type="entry name" value="NCX, central ion-binding region"/>
    <property type="match status" value="2"/>
</dbReference>
<dbReference type="InterPro" id="IPR004481">
    <property type="entry name" value="K/Na/Ca-exchanger"/>
</dbReference>
<dbReference type="InterPro" id="IPR004837">
    <property type="entry name" value="NaCa_Exmemb"/>
</dbReference>
<dbReference type="InterPro" id="IPR044880">
    <property type="entry name" value="NCX_ion-bd_dom_sf"/>
</dbReference>
<dbReference type="NCBIfam" id="TIGR00367">
    <property type="entry name" value="calcium/sodium antiporter"/>
    <property type="match status" value="1"/>
</dbReference>
<dbReference type="PANTHER" id="PTHR10846:SF8">
    <property type="entry name" value="INNER MEMBRANE PROTEIN YRBG"/>
    <property type="match status" value="1"/>
</dbReference>
<dbReference type="PANTHER" id="PTHR10846">
    <property type="entry name" value="SODIUM/POTASSIUM/CALCIUM EXCHANGER"/>
    <property type="match status" value="1"/>
</dbReference>
<dbReference type="Pfam" id="PF01699">
    <property type="entry name" value="Na_Ca_ex"/>
    <property type="match status" value="2"/>
</dbReference>